<name>CA11_CONLT</name>
<keyword id="KW-0008">Acetylcholine receptor inhibiting toxin</keyword>
<keyword id="KW-0027">Amidation</keyword>
<keyword id="KW-1015">Disulfide bond</keyword>
<keyword id="KW-0872">Ion channel impairing toxin</keyword>
<keyword id="KW-0528">Neurotoxin</keyword>
<keyword id="KW-0629">Postsynaptic neurotoxin</keyword>
<keyword id="KW-0964">Secreted</keyword>
<keyword id="KW-0732">Signal</keyword>
<keyword id="KW-0800">Toxin</keyword>
<protein>
    <recommendedName>
        <fullName evidence="6">Alpha-conotoxin Lt1a</fullName>
    </recommendedName>
    <alternativeName>
        <fullName evidence="5">Alpha-conotoxin Lt1.1</fullName>
    </alternativeName>
</protein>
<feature type="signal peptide" evidence="2">
    <location>
        <begin position="1"/>
        <end position="21"/>
    </location>
</feature>
<feature type="propeptide" id="PRO_0000315417" evidence="9">
    <location>
        <begin position="22"/>
        <end position="48"/>
    </location>
</feature>
<feature type="peptide" id="PRO_0000315418" description="Alpha-conotoxin Lt1a" evidence="9">
    <location>
        <begin position="49"/>
        <end position="64"/>
    </location>
</feature>
<feature type="propeptide" id="PRO_0000392694" evidence="7">
    <location>
        <begin position="66"/>
        <end position="68"/>
    </location>
</feature>
<feature type="region of interest" description="Lacks the Ser-Xaa-Pro motif that is crucial for potent interaction with nAChR" evidence="7">
    <location>
        <begin position="52"/>
        <end position="54"/>
    </location>
</feature>
<feature type="region of interest" description="Ser-Xaa-Pro motif, crucial for potent interaction with nAChR" evidence="1">
    <location>
        <begin position="52"/>
        <end position="54"/>
    </location>
</feature>
<feature type="modified residue" description="Cysteine amide" evidence="9">
    <location>
        <position position="64"/>
    </location>
</feature>
<feature type="disulfide bond" evidence="1 9">
    <location>
        <begin position="50"/>
        <end position="56"/>
    </location>
</feature>
<feature type="disulfide bond" evidence="1 9">
    <location>
        <begin position="51"/>
        <end position="64"/>
    </location>
</feature>
<feature type="mutagenesis site" description="3-fold decrease in ability to block alpha-3-beta-2/CHRNA3-CHRNB2 nAChRs. 2.4-fold decrease in ability to block alpha-3-beta-2/CHRNA3-CHRNB2 nAChRs; when associated with P-54." evidence="3">
    <original>A</original>
    <variation>S</variation>
    <location>
        <position position="52"/>
    </location>
</feature>
<feature type="mutagenesis site" description="2.4-fold decrease in ability to block alpha-3-beta-2/CHRNA3-CHRNB2 nAChRs; when associated with S-52." evidence="3">
    <original>A</original>
    <variation>P</variation>
    <location>
        <position position="54"/>
    </location>
</feature>
<reference key="1">
    <citation type="journal article" date="2006" name="Genomics">
        <title>Diversity and evolution of conotoxins based on gene expression profiling of Conus litteratus.</title>
        <authorList>
            <person name="Pi C."/>
            <person name="Liu J."/>
            <person name="Peng C."/>
            <person name="Liu Y."/>
            <person name="Jiang X."/>
            <person name="Zhao Y."/>
            <person name="Tang S."/>
            <person name="Wang L."/>
            <person name="Dong M."/>
            <person name="Chen S."/>
            <person name="Xu A."/>
        </authorList>
    </citation>
    <scope>NUCLEOTIDE SEQUENCE [MRNA]</scope>
    <source>
        <tissue>Venom duct</tissue>
    </source>
</reference>
<reference key="2">
    <citation type="journal article" date="2010" name="J. Biol. Chem.">
        <title>Atypical alpha-conotoxin LtIA from Conus litteratus targets a novel microsite of the alpha3beta2 nicotinic receptor.</title>
        <authorList>
            <person name="Luo S."/>
            <person name="Akondi K.B."/>
            <person name="Zhangsun D."/>
            <person name="Wu Y."/>
            <person name="Zhu X."/>
            <person name="Hu Y."/>
            <person name="Christensen S."/>
            <person name="Dowell C."/>
            <person name="Daly N.L."/>
            <person name="Craik D.J."/>
            <person name="Wang C.I."/>
            <person name="Lewis R.J."/>
            <person name="Alewood P.F."/>
            <person name="Michael McIntosh J."/>
        </authorList>
    </citation>
    <scope>FUNCTION</scope>
    <scope>SYNTHESIS OF 49-64</scope>
    <scope>PROBABLE AMIDATION AT CYS-64</scope>
    <scope>3D-STRUCTURE MODELING IN COMPLEX WITH ALPHA-3-BETA-2 NACHRS</scope>
    <scope>MUTAGENESIS OF ALA-52 AND ALA-54</scope>
</reference>
<reference key="3">
    <citation type="journal article" date="2021" name="ACS Chem. Neurosci.">
        <title>Design, synthesis, and activity of an alpha-conotoxin LtIA fluorescent analogue.</title>
        <authorList>
            <person name="Yang Y."/>
            <person name="Tan Y."/>
            <person name="Zhangsun D."/>
            <person name="Zhu X."/>
            <person name="Luo S."/>
        </authorList>
    </citation>
    <scope>FUNCTION</scope>
    <scope>BIOTECHNOLOGY</scope>
</reference>
<organism>
    <name type="scientific">Conus litteratus</name>
    <name type="common">Lettered cone</name>
    <dbReference type="NCBI Taxonomy" id="89445"/>
    <lineage>
        <taxon>Eukaryota</taxon>
        <taxon>Metazoa</taxon>
        <taxon>Spiralia</taxon>
        <taxon>Lophotrochozoa</taxon>
        <taxon>Mollusca</taxon>
        <taxon>Gastropoda</taxon>
        <taxon>Caenogastropoda</taxon>
        <taxon>Neogastropoda</taxon>
        <taxon>Conoidea</taxon>
        <taxon>Conidae</taxon>
        <taxon>Conus</taxon>
        <taxon>Elisaconus</taxon>
    </lineage>
</organism>
<accession>Q2I2R8</accession>
<comment type="function">
    <text evidence="3 4">Alpha-conotoxins act on postsynaptic membranes, they bind to the nicotinic acetylcholine receptors (nAChR) and thus inhibit them. This toxin potently and selectively blocks rat alpha-3-beta-2/CHRNA3-CHRNB2 nAChRs (IC(50)=9.8-22.95 nM) (PubMed:20145249, PubMed:34523332). Also shows a moderate block on rat alpha-6/alpha-3-beta-2-beta-3 (CHRNA6/CHRNA3-CHRNB2-CHRNB3) nAChRs (IC(50)=84.4 nM), and a weak activity on rat alpha-6/alpha-3-beta-4 (CHRNA6/CHRNA3-CHRNB4) nAChRs (IC(50)~6 uM) (PubMed:20145249). The block of alpha-3-beta-2/CHRNA3-CHRNB2 nAChRs is rapidly reversible (PubMed:20145249). It prevents alpha-conotoxin MII from blocking alpha-3-beta-2/CHRNA3-CHRNB2 nAChRs, suggesting that both toxins have overlapping binding sites (PubMed:20145249). In addition, this toxin shows a distinct nAChR binding mode from other alpha-conotoxins (PubMed:20145249). It potently blocks alpha-3-beta-2/CHRNA3-CHRNB2 nAChRs, although it lacks the highly conserved motif Ser-Xaa-Pro motif found in many other alpha-conotoxins to be crucial for potent nAChR interaction (PubMed:20145249). It seems to show relative flexibility in solution, which is consistent with the absence of the conserved Ser and Pro residues that likely have a structure-defining role in other alpha-conotoxins (PubMed:20145249). Molecular docking simulations also suggest that this toxin has a surprisingly shallow binding site on the alpha-3-beta-2/CHRNA3-CHRNB2 nAChRs (PubMed:20145249).</text>
</comment>
<comment type="subcellular location">
    <subcellularLocation>
        <location evidence="8">Secreted</location>
    </subcellularLocation>
</comment>
<comment type="tissue specificity">
    <text evidence="8">Expressed by the venom duct.</text>
</comment>
<comment type="domain">
    <text evidence="8">The cysteine framework is I (CC-C-C). Alpha4/7 pattern.</text>
</comment>
<comment type="biotechnology">
    <text evidence="4">The fluorescent analog of LtIA (LtIA-F) is a highly selective molecule targeting alpha-3-beta-2/CHRNA3-CHRNB2 nAChR that could be used as a molecular probe for the study of the structure, function, and distribution of this receptor in live systems. It displays a ~4-fold decrease in potency towards alpha-3-beta-2/CHRNA3-CHRNB2 compared with native LtIA without a change in selectivity.</text>
</comment>
<comment type="miscellaneous">
    <text evidence="3">Negative results: does not show activity on alpha-9-alpha-10/CHRNA9-CHRNA10, alpha-4-beta-2/CHRNA4-CHRNB2, alpha-4-beta-4/CHRNA4-CHRNB4, alpha-3-beta-4/CHRNA3-CHRNB4, alpha-2-beta-2/CHRNA2-CHRNB2, alpha-2-beta-4/CHRNA2-CHRNB4, alpha-1-beta-1-delta-epsilon/CHRNA1-CHRNB1-CHRND-CHRNE, and alpha-7/CHRNA7.</text>
</comment>
<comment type="similarity">
    <text evidence="7">Belongs to the conotoxin A superfamily.</text>
</comment>
<dbReference type="EMBL" id="DQ345364">
    <property type="protein sequence ID" value="ABC74972.1"/>
    <property type="molecule type" value="mRNA"/>
</dbReference>
<dbReference type="ConoServer" id="1151">
    <property type="toxin name" value="LtIA precursor"/>
</dbReference>
<dbReference type="GO" id="GO:0005576">
    <property type="term" value="C:extracellular region"/>
    <property type="evidence" value="ECO:0007669"/>
    <property type="project" value="UniProtKB-SubCell"/>
</dbReference>
<dbReference type="GO" id="GO:0035792">
    <property type="term" value="C:host cell postsynaptic membrane"/>
    <property type="evidence" value="ECO:0007669"/>
    <property type="project" value="UniProtKB-KW"/>
</dbReference>
<dbReference type="GO" id="GO:0030550">
    <property type="term" value="F:acetylcholine receptor inhibitor activity"/>
    <property type="evidence" value="ECO:0007669"/>
    <property type="project" value="UniProtKB-KW"/>
</dbReference>
<dbReference type="GO" id="GO:0099106">
    <property type="term" value="F:ion channel regulator activity"/>
    <property type="evidence" value="ECO:0007669"/>
    <property type="project" value="UniProtKB-KW"/>
</dbReference>
<dbReference type="GO" id="GO:0090729">
    <property type="term" value="F:toxin activity"/>
    <property type="evidence" value="ECO:0007669"/>
    <property type="project" value="UniProtKB-KW"/>
</dbReference>
<dbReference type="InterPro" id="IPR009958">
    <property type="entry name" value="Conotoxin_a-typ"/>
</dbReference>
<dbReference type="Pfam" id="PF07365">
    <property type="entry name" value="Toxin_8"/>
    <property type="match status" value="1"/>
</dbReference>
<proteinExistence type="evidence at protein level"/>
<sequence>MGMRMMFIMFMLVVLATTVVTFTSDRALDAMNAAASNKASRLIALAVRGCCARAACAGIHQELCGGGR</sequence>
<evidence type="ECO:0000250" key="1">
    <source>
        <dbReference type="UniProtKB" id="P56636"/>
    </source>
</evidence>
<evidence type="ECO:0000255" key="2"/>
<evidence type="ECO:0000269" key="3">
    <source>
    </source>
</evidence>
<evidence type="ECO:0000269" key="4">
    <source>
    </source>
</evidence>
<evidence type="ECO:0000303" key="5">
    <source>
    </source>
</evidence>
<evidence type="ECO:0000303" key="6">
    <source>
    </source>
</evidence>
<evidence type="ECO:0000305" key="7"/>
<evidence type="ECO:0000305" key="8">
    <source>
    </source>
</evidence>
<evidence type="ECO:0000305" key="9">
    <source>
    </source>
</evidence>